<reference key="1">
    <citation type="journal article" date="2004" name="J. Bacteriol.">
        <title>Comparative genomics of two Leptospira interrogans serovars reveals novel insights into physiology and pathogenesis.</title>
        <authorList>
            <person name="Nascimento A.L.T.O."/>
            <person name="Ko A.I."/>
            <person name="Martins E.A.L."/>
            <person name="Monteiro-Vitorello C.B."/>
            <person name="Ho P.L."/>
            <person name="Haake D.A."/>
            <person name="Verjovski-Almeida S."/>
            <person name="Hartskeerl R.A."/>
            <person name="Marques M.V."/>
            <person name="Oliveira M.C."/>
            <person name="Menck C.F.M."/>
            <person name="Leite L.C.C."/>
            <person name="Carrer H."/>
            <person name="Coutinho L.L."/>
            <person name="Degrave W.M."/>
            <person name="Dellagostin O.A."/>
            <person name="El-Dorry H."/>
            <person name="Ferro E.S."/>
            <person name="Ferro M.I.T."/>
            <person name="Furlan L.R."/>
            <person name="Gamberini M."/>
            <person name="Giglioti E.A."/>
            <person name="Goes-Neto A."/>
            <person name="Goldman G.H."/>
            <person name="Goldman M.H.S."/>
            <person name="Harakava R."/>
            <person name="Jeronimo S.M.B."/>
            <person name="Junqueira-de-Azevedo I.L.M."/>
            <person name="Kimura E.T."/>
            <person name="Kuramae E.E."/>
            <person name="Lemos E.G.M."/>
            <person name="Lemos M.V.F."/>
            <person name="Marino C.L."/>
            <person name="Nunes L.R."/>
            <person name="de Oliveira R.C."/>
            <person name="Pereira G.G."/>
            <person name="Reis M.S."/>
            <person name="Schriefer A."/>
            <person name="Siqueira W.J."/>
            <person name="Sommer P."/>
            <person name="Tsai S.M."/>
            <person name="Simpson A.J.G."/>
            <person name="Ferro J.A."/>
            <person name="Camargo L.E.A."/>
            <person name="Kitajima J.P."/>
            <person name="Setubal J.C."/>
            <person name="Van Sluys M.A."/>
        </authorList>
    </citation>
    <scope>NUCLEOTIDE SEQUENCE [LARGE SCALE GENOMIC DNA]</scope>
    <source>
        <strain>Fiocruz L1-130</strain>
    </source>
</reference>
<evidence type="ECO:0000250" key="1"/>
<evidence type="ECO:0000255" key="2">
    <source>
        <dbReference type="HAMAP-Rule" id="MF_00138"/>
    </source>
</evidence>
<name>PUR2_LEPIC</name>
<sequence length="426" mass="46258">MQVKLKVLLIGSGGRESAIAFYLRKSVLLSELKVFPGNGGFPDQELLPPDSFQVLDKNSVQSFLKQNPFDLIVVGPEDPLVAGFADWAAELNIPVFGPDSFCAQVEGSKDFAKSLMTEAKIPTAEYKTFSEYSDSLKYLESKSIPIVIKADGLAAGKGVTVATSKEMAQTALKEIFKDKKFGSSGNQVVIEEFMEGQEASIFAISDGDSYFLLPAAQDHKRAFDGDQGPNTGGMGAYCPAPVISESILQKVKEQIFDPMFDLFRKKGHPYRGLLYAGLMISPNGEPKVVEFNCRFGDPETQCVLAMLDGDLLELLYRASTGKIKGIQAAVKKGAAVVVVLAAQGYPDFYEKNIPLNLPETSGQNVHLFHAGTLKKDGKVFSSGGRILGIVAQGADLKSSVDQAYSFLEKIQAPKTFYRKDIGYRAL</sequence>
<feature type="chain" id="PRO_0000151458" description="Phosphoribosylamine--glycine ligase">
    <location>
        <begin position="1"/>
        <end position="426"/>
    </location>
</feature>
<feature type="domain" description="ATP-grasp" evidence="2">
    <location>
        <begin position="113"/>
        <end position="320"/>
    </location>
</feature>
<feature type="binding site" evidence="2">
    <location>
        <begin position="139"/>
        <end position="200"/>
    </location>
    <ligand>
        <name>ATP</name>
        <dbReference type="ChEBI" id="CHEBI:30616"/>
    </ligand>
</feature>
<feature type="binding site" evidence="2">
    <location>
        <position position="290"/>
    </location>
    <ligand>
        <name>Mg(2+)</name>
        <dbReference type="ChEBI" id="CHEBI:18420"/>
    </ligand>
</feature>
<feature type="binding site" evidence="2">
    <location>
        <position position="292"/>
    </location>
    <ligand>
        <name>Mg(2+)</name>
        <dbReference type="ChEBI" id="CHEBI:18420"/>
    </ligand>
</feature>
<protein>
    <recommendedName>
        <fullName evidence="2">Phosphoribosylamine--glycine ligase</fullName>
        <ecNumber evidence="2">6.3.4.13</ecNumber>
    </recommendedName>
    <alternativeName>
        <fullName evidence="2">GARS</fullName>
    </alternativeName>
    <alternativeName>
        <fullName evidence="2">Glycinamide ribonucleotide synthetase</fullName>
    </alternativeName>
    <alternativeName>
        <fullName evidence="2">Phosphoribosylglycinamide synthetase</fullName>
    </alternativeName>
</protein>
<comment type="catalytic activity">
    <reaction evidence="2">
        <text>5-phospho-beta-D-ribosylamine + glycine + ATP = N(1)-(5-phospho-beta-D-ribosyl)glycinamide + ADP + phosphate + H(+)</text>
        <dbReference type="Rhea" id="RHEA:17453"/>
        <dbReference type="ChEBI" id="CHEBI:15378"/>
        <dbReference type="ChEBI" id="CHEBI:30616"/>
        <dbReference type="ChEBI" id="CHEBI:43474"/>
        <dbReference type="ChEBI" id="CHEBI:57305"/>
        <dbReference type="ChEBI" id="CHEBI:58681"/>
        <dbReference type="ChEBI" id="CHEBI:143788"/>
        <dbReference type="ChEBI" id="CHEBI:456216"/>
        <dbReference type="EC" id="6.3.4.13"/>
    </reaction>
</comment>
<comment type="cofactor">
    <cofactor evidence="1">
        <name>Mg(2+)</name>
        <dbReference type="ChEBI" id="CHEBI:18420"/>
    </cofactor>
    <cofactor evidence="1">
        <name>Mn(2+)</name>
        <dbReference type="ChEBI" id="CHEBI:29035"/>
    </cofactor>
    <text evidence="1">Binds 1 Mg(2+) or Mn(2+) ion per subunit.</text>
</comment>
<comment type="pathway">
    <text evidence="2">Purine metabolism; IMP biosynthesis via de novo pathway; N(1)-(5-phospho-D-ribosyl)glycinamide from 5-phospho-alpha-D-ribose 1-diphosphate: step 2/2.</text>
</comment>
<comment type="similarity">
    <text evidence="2">Belongs to the GARS family.</text>
</comment>
<dbReference type="EC" id="6.3.4.13" evidence="2"/>
<dbReference type="EMBL" id="AE016823">
    <property type="protein sequence ID" value="AAS69093.1"/>
    <property type="molecule type" value="Genomic_DNA"/>
</dbReference>
<dbReference type="RefSeq" id="WP_001197373.1">
    <property type="nucleotide sequence ID" value="NC_005823.1"/>
</dbReference>
<dbReference type="SMR" id="Q72V31"/>
<dbReference type="GeneID" id="61143824"/>
<dbReference type="KEGG" id="lic:LIC_10472"/>
<dbReference type="HOGENOM" id="CLU_027420_3_1_12"/>
<dbReference type="UniPathway" id="UPA00074">
    <property type="reaction ID" value="UER00125"/>
</dbReference>
<dbReference type="Proteomes" id="UP000007037">
    <property type="component" value="Chromosome I"/>
</dbReference>
<dbReference type="GO" id="GO:0005524">
    <property type="term" value="F:ATP binding"/>
    <property type="evidence" value="ECO:0007669"/>
    <property type="project" value="UniProtKB-KW"/>
</dbReference>
<dbReference type="GO" id="GO:0046872">
    <property type="term" value="F:metal ion binding"/>
    <property type="evidence" value="ECO:0007669"/>
    <property type="project" value="UniProtKB-KW"/>
</dbReference>
<dbReference type="GO" id="GO:0004637">
    <property type="term" value="F:phosphoribosylamine-glycine ligase activity"/>
    <property type="evidence" value="ECO:0007669"/>
    <property type="project" value="UniProtKB-UniRule"/>
</dbReference>
<dbReference type="GO" id="GO:0006189">
    <property type="term" value="P:'de novo' IMP biosynthetic process"/>
    <property type="evidence" value="ECO:0007669"/>
    <property type="project" value="UniProtKB-UniRule"/>
</dbReference>
<dbReference type="GO" id="GO:0009113">
    <property type="term" value="P:purine nucleobase biosynthetic process"/>
    <property type="evidence" value="ECO:0007669"/>
    <property type="project" value="InterPro"/>
</dbReference>
<dbReference type="FunFam" id="3.30.1490.20:FF:000006">
    <property type="entry name" value="phosphoribosylamine--glycine ligase, chloroplastic-like"/>
    <property type="match status" value="1"/>
</dbReference>
<dbReference type="FunFam" id="3.30.470.20:FF:000018">
    <property type="entry name" value="Trifunctional purine biosynthetic protein adenosine-3"/>
    <property type="match status" value="1"/>
</dbReference>
<dbReference type="Gene3D" id="3.40.50.20">
    <property type="match status" value="1"/>
</dbReference>
<dbReference type="Gene3D" id="3.30.1490.20">
    <property type="entry name" value="ATP-grasp fold, A domain"/>
    <property type="match status" value="1"/>
</dbReference>
<dbReference type="Gene3D" id="3.30.470.20">
    <property type="entry name" value="ATP-grasp fold, B domain"/>
    <property type="match status" value="1"/>
</dbReference>
<dbReference type="Gene3D" id="3.90.600.10">
    <property type="entry name" value="Phosphoribosylglycinamide synthetase, C-terminal domain"/>
    <property type="match status" value="1"/>
</dbReference>
<dbReference type="HAMAP" id="MF_00138">
    <property type="entry name" value="GARS"/>
    <property type="match status" value="1"/>
</dbReference>
<dbReference type="InterPro" id="IPR011761">
    <property type="entry name" value="ATP-grasp"/>
</dbReference>
<dbReference type="InterPro" id="IPR013815">
    <property type="entry name" value="ATP_grasp_subdomain_1"/>
</dbReference>
<dbReference type="InterPro" id="IPR016185">
    <property type="entry name" value="PreATP-grasp_dom_sf"/>
</dbReference>
<dbReference type="InterPro" id="IPR020561">
    <property type="entry name" value="PRibGlycinamid_synth_ATP-grasp"/>
</dbReference>
<dbReference type="InterPro" id="IPR000115">
    <property type="entry name" value="PRibGlycinamide_synth"/>
</dbReference>
<dbReference type="InterPro" id="IPR020560">
    <property type="entry name" value="PRibGlycinamide_synth_C-dom"/>
</dbReference>
<dbReference type="InterPro" id="IPR037123">
    <property type="entry name" value="PRibGlycinamide_synth_C_sf"/>
</dbReference>
<dbReference type="InterPro" id="IPR020559">
    <property type="entry name" value="PRibGlycinamide_synth_CS"/>
</dbReference>
<dbReference type="InterPro" id="IPR020562">
    <property type="entry name" value="PRibGlycinamide_synth_N"/>
</dbReference>
<dbReference type="InterPro" id="IPR011054">
    <property type="entry name" value="Rudment_hybrid_motif"/>
</dbReference>
<dbReference type="NCBIfam" id="TIGR00877">
    <property type="entry name" value="purD"/>
    <property type="match status" value="1"/>
</dbReference>
<dbReference type="PANTHER" id="PTHR43472">
    <property type="entry name" value="PHOSPHORIBOSYLAMINE--GLYCINE LIGASE"/>
    <property type="match status" value="1"/>
</dbReference>
<dbReference type="PANTHER" id="PTHR43472:SF1">
    <property type="entry name" value="PHOSPHORIBOSYLAMINE--GLYCINE LIGASE, CHLOROPLASTIC"/>
    <property type="match status" value="1"/>
</dbReference>
<dbReference type="Pfam" id="PF01071">
    <property type="entry name" value="GARS_A"/>
    <property type="match status" value="1"/>
</dbReference>
<dbReference type="Pfam" id="PF02843">
    <property type="entry name" value="GARS_C"/>
    <property type="match status" value="1"/>
</dbReference>
<dbReference type="Pfam" id="PF02844">
    <property type="entry name" value="GARS_N"/>
    <property type="match status" value="1"/>
</dbReference>
<dbReference type="SMART" id="SM01209">
    <property type="entry name" value="GARS_A"/>
    <property type="match status" value="1"/>
</dbReference>
<dbReference type="SMART" id="SM01210">
    <property type="entry name" value="GARS_C"/>
    <property type="match status" value="1"/>
</dbReference>
<dbReference type="SUPFAM" id="SSF56059">
    <property type="entry name" value="Glutathione synthetase ATP-binding domain-like"/>
    <property type="match status" value="1"/>
</dbReference>
<dbReference type="SUPFAM" id="SSF52440">
    <property type="entry name" value="PreATP-grasp domain"/>
    <property type="match status" value="1"/>
</dbReference>
<dbReference type="SUPFAM" id="SSF51246">
    <property type="entry name" value="Rudiment single hybrid motif"/>
    <property type="match status" value="1"/>
</dbReference>
<dbReference type="PROSITE" id="PS50975">
    <property type="entry name" value="ATP_GRASP"/>
    <property type="match status" value="1"/>
</dbReference>
<dbReference type="PROSITE" id="PS00184">
    <property type="entry name" value="GARS"/>
    <property type="match status" value="1"/>
</dbReference>
<organism>
    <name type="scientific">Leptospira interrogans serogroup Icterohaemorrhagiae serovar copenhageni (strain Fiocruz L1-130)</name>
    <dbReference type="NCBI Taxonomy" id="267671"/>
    <lineage>
        <taxon>Bacteria</taxon>
        <taxon>Pseudomonadati</taxon>
        <taxon>Spirochaetota</taxon>
        <taxon>Spirochaetia</taxon>
        <taxon>Leptospirales</taxon>
        <taxon>Leptospiraceae</taxon>
        <taxon>Leptospira</taxon>
    </lineage>
</organism>
<proteinExistence type="inferred from homology"/>
<keyword id="KW-0067">ATP-binding</keyword>
<keyword id="KW-0436">Ligase</keyword>
<keyword id="KW-0460">Magnesium</keyword>
<keyword id="KW-0464">Manganese</keyword>
<keyword id="KW-0479">Metal-binding</keyword>
<keyword id="KW-0547">Nucleotide-binding</keyword>
<keyword id="KW-0658">Purine biosynthesis</keyword>
<gene>
    <name evidence="2" type="primary">purD</name>
    <name type="ordered locus">LIC_10472</name>
</gene>
<accession>Q72V31</accession>